<protein>
    <recommendedName>
        <fullName evidence="1">UPF0060 membrane protein ABO_1373</fullName>
    </recommendedName>
</protein>
<sequence length="109" mass="11812">MLALYTLGLFILTAVTEIVGCYLPYLWLKKSAPGWVLLPAAASLAMFAWLLSLHPTDAGRVYAAYGGVYVFVALLWLWGVEGVRPHPWDFVGVAVALAGMGIIMFAPRG</sequence>
<comment type="subcellular location">
    <subcellularLocation>
        <location evidence="1">Cell inner membrane</location>
        <topology evidence="1">Multi-pass membrane protein</topology>
    </subcellularLocation>
</comment>
<comment type="similarity">
    <text evidence="1">Belongs to the UPF0060 family.</text>
</comment>
<gene>
    <name type="ordered locus">ABO_1373</name>
</gene>
<reference key="1">
    <citation type="journal article" date="2006" name="Nat. Biotechnol.">
        <title>Genome sequence of the ubiquitous hydrocarbon-degrading marine bacterium Alcanivorax borkumensis.</title>
        <authorList>
            <person name="Schneiker S."/>
            <person name="Martins dos Santos V.A.P."/>
            <person name="Bartels D."/>
            <person name="Bekel T."/>
            <person name="Brecht M."/>
            <person name="Buhrmester J."/>
            <person name="Chernikova T.N."/>
            <person name="Denaro R."/>
            <person name="Ferrer M."/>
            <person name="Gertler C."/>
            <person name="Goesmann A."/>
            <person name="Golyshina O.V."/>
            <person name="Kaminski F."/>
            <person name="Khachane A.N."/>
            <person name="Lang S."/>
            <person name="Linke B."/>
            <person name="McHardy A.C."/>
            <person name="Meyer F."/>
            <person name="Nechitaylo T."/>
            <person name="Puehler A."/>
            <person name="Regenhardt D."/>
            <person name="Rupp O."/>
            <person name="Sabirova J.S."/>
            <person name="Selbitschka W."/>
            <person name="Yakimov M.M."/>
            <person name="Timmis K.N."/>
            <person name="Vorhoelter F.-J."/>
            <person name="Weidner S."/>
            <person name="Kaiser O."/>
            <person name="Golyshin P.N."/>
        </authorList>
    </citation>
    <scope>NUCLEOTIDE SEQUENCE [LARGE SCALE GENOMIC DNA]</scope>
    <source>
        <strain>ATCC 700651 / DSM 11573 / NCIMB 13689 / SK2</strain>
    </source>
</reference>
<name>Y1373_ALCBS</name>
<keyword id="KW-0997">Cell inner membrane</keyword>
<keyword id="KW-1003">Cell membrane</keyword>
<keyword id="KW-0472">Membrane</keyword>
<keyword id="KW-1185">Reference proteome</keyword>
<keyword id="KW-0812">Transmembrane</keyword>
<keyword id="KW-1133">Transmembrane helix</keyword>
<evidence type="ECO:0000255" key="1">
    <source>
        <dbReference type="HAMAP-Rule" id="MF_00010"/>
    </source>
</evidence>
<proteinExistence type="inferred from homology"/>
<dbReference type="EMBL" id="AM286690">
    <property type="protein sequence ID" value="CAL16821.1"/>
    <property type="molecule type" value="Genomic_DNA"/>
</dbReference>
<dbReference type="RefSeq" id="WP_011588654.1">
    <property type="nucleotide sequence ID" value="NC_008260.1"/>
</dbReference>
<dbReference type="SMR" id="Q0VPS7"/>
<dbReference type="STRING" id="393595.ABO_1373"/>
<dbReference type="KEGG" id="abo:ABO_1373"/>
<dbReference type="eggNOG" id="COG1742">
    <property type="taxonomic scope" value="Bacteria"/>
</dbReference>
<dbReference type="HOGENOM" id="CLU_117653_2_0_6"/>
<dbReference type="OrthoDB" id="123240at2"/>
<dbReference type="Proteomes" id="UP000008871">
    <property type="component" value="Chromosome"/>
</dbReference>
<dbReference type="GO" id="GO:0005886">
    <property type="term" value="C:plasma membrane"/>
    <property type="evidence" value="ECO:0007669"/>
    <property type="project" value="UniProtKB-SubCell"/>
</dbReference>
<dbReference type="HAMAP" id="MF_00010">
    <property type="entry name" value="UPF0060"/>
    <property type="match status" value="1"/>
</dbReference>
<dbReference type="InterPro" id="IPR003844">
    <property type="entry name" value="UPF0060"/>
</dbReference>
<dbReference type="NCBIfam" id="NF002586">
    <property type="entry name" value="PRK02237.1"/>
    <property type="match status" value="1"/>
</dbReference>
<dbReference type="PANTHER" id="PTHR36116">
    <property type="entry name" value="UPF0060 MEMBRANE PROTEIN YNFA"/>
    <property type="match status" value="1"/>
</dbReference>
<dbReference type="PANTHER" id="PTHR36116:SF1">
    <property type="entry name" value="UPF0060 MEMBRANE PROTEIN YNFA"/>
    <property type="match status" value="1"/>
</dbReference>
<dbReference type="Pfam" id="PF02694">
    <property type="entry name" value="UPF0060"/>
    <property type="match status" value="1"/>
</dbReference>
<dbReference type="SUPFAM" id="SSF103481">
    <property type="entry name" value="Multidrug resistance efflux transporter EmrE"/>
    <property type="match status" value="1"/>
</dbReference>
<organism>
    <name type="scientific">Alcanivorax borkumensis (strain ATCC 700651 / DSM 11573 / NCIMB 13689 / SK2)</name>
    <dbReference type="NCBI Taxonomy" id="393595"/>
    <lineage>
        <taxon>Bacteria</taxon>
        <taxon>Pseudomonadati</taxon>
        <taxon>Pseudomonadota</taxon>
        <taxon>Gammaproteobacteria</taxon>
        <taxon>Oceanospirillales</taxon>
        <taxon>Alcanivoracaceae</taxon>
        <taxon>Alcanivorax</taxon>
    </lineage>
</organism>
<accession>Q0VPS7</accession>
<feature type="chain" id="PRO_0000282203" description="UPF0060 membrane protein ABO_1373">
    <location>
        <begin position="1"/>
        <end position="109"/>
    </location>
</feature>
<feature type="transmembrane region" description="Helical" evidence="1">
    <location>
        <begin position="1"/>
        <end position="21"/>
    </location>
</feature>
<feature type="transmembrane region" description="Helical" evidence="1">
    <location>
        <begin position="33"/>
        <end position="53"/>
    </location>
</feature>
<feature type="transmembrane region" description="Helical" evidence="1">
    <location>
        <begin position="63"/>
        <end position="83"/>
    </location>
</feature>
<feature type="transmembrane region" description="Helical" evidence="1">
    <location>
        <begin position="87"/>
        <end position="107"/>
    </location>
</feature>